<organism>
    <name type="scientific">Phaeosphaeria nodorum (strain SN15 / ATCC MYA-4574 / FGSC 10173)</name>
    <name type="common">Glume blotch fungus</name>
    <name type="synonym">Parastagonospora nodorum</name>
    <dbReference type="NCBI Taxonomy" id="321614"/>
    <lineage>
        <taxon>Eukaryota</taxon>
        <taxon>Fungi</taxon>
        <taxon>Dikarya</taxon>
        <taxon>Ascomycota</taxon>
        <taxon>Pezizomycotina</taxon>
        <taxon>Dothideomycetes</taxon>
        <taxon>Pleosporomycetidae</taxon>
        <taxon>Pleosporales</taxon>
        <taxon>Pleosporineae</taxon>
        <taxon>Phaeosphaeriaceae</taxon>
        <taxon>Parastagonospora</taxon>
    </lineage>
</organism>
<dbReference type="EMBL" id="CH445331">
    <property type="protein sequence ID" value="EAT87293.2"/>
    <property type="molecule type" value="Genomic_DNA"/>
</dbReference>
<dbReference type="RefSeq" id="XP_001795315.1">
    <property type="nucleotide sequence ID" value="XM_001795263.1"/>
</dbReference>
<dbReference type="SMR" id="Q0UTL2"/>
<dbReference type="FunCoup" id="Q0UTL2">
    <property type="interactions" value="104"/>
</dbReference>
<dbReference type="STRING" id="321614.Q0UTL2"/>
<dbReference type="EnsemblFungi" id="SNOT_04902">
    <property type="protein sequence ID" value="SNOT_04902"/>
    <property type="gene ID" value="SNOG_04902"/>
</dbReference>
<dbReference type="GeneID" id="5972190"/>
<dbReference type="KEGG" id="pno:SNOG_04902"/>
<dbReference type="VEuPathDB" id="FungiDB:JI435_049020"/>
<dbReference type="eggNOG" id="ENOG502R9PE">
    <property type="taxonomic scope" value="Eukaryota"/>
</dbReference>
<dbReference type="HOGENOM" id="CLU_033828_0_0_1"/>
<dbReference type="InParanoid" id="Q0UTL2"/>
<dbReference type="Proteomes" id="UP000001055">
    <property type="component" value="Unassembled WGS sequence"/>
</dbReference>
<dbReference type="GO" id="GO:0005694">
    <property type="term" value="C:chromosome"/>
    <property type="evidence" value="ECO:0007669"/>
    <property type="project" value="UniProtKB-SubCell"/>
</dbReference>
<dbReference type="GO" id="GO:0005634">
    <property type="term" value="C:nucleus"/>
    <property type="evidence" value="ECO:0007669"/>
    <property type="project" value="UniProtKB-SubCell"/>
</dbReference>
<dbReference type="GO" id="GO:0003677">
    <property type="term" value="F:DNA binding"/>
    <property type="evidence" value="ECO:0007669"/>
    <property type="project" value="UniProtKB-KW"/>
</dbReference>
<dbReference type="GO" id="GO:0042393">
    <property type="term" value="F:histone binding"/>
    <property type="evidence" value="ECO:0000318"/>
    <property type="project" value="GO_Central"/>
</dbReference>
<dbReference type="GO" id="GO:0031491">
    <property type="term" value="F:nucleosome binding"/>
    <property type="evidence" value="ECO:0000318"/>
    <property type="project" value="GO_Central"/>
</dbReference>
<dbReference type="Gene3D" id="2.30.29.30">
    <property type="entry name" value="Pleckstrin-homology domain (PH domain)/Phosphotyrosine-binding domain (PTB)"/>
    <property type="match status" value="1"/>
</dbReference>
<dbReference type="InterPro" id="IPR011993">
    <property type="entry name" value="PH-like_dom_sf"/>
</dbReference>
<dbReference type="InterPro" id="IPR013719">
    <property type="entry name" value="RTT106/SPT16-like_middle_dom"/>
</dbReference>
<dbReference type="InterPro" id="IPR050454">
    <property type="entry name" value="RTT106/SSRP1_HistChap/FACT"/>
</dbReference>
<dbReference type="PANTHER" id="PTHR45849">
    <property type="entry name" value="FACT COMPLEX SUBUNIT SSRP1"/>
    <property type="match status" value="1"/>
</dbReference>
<dbReference type="PANTHER" id="PTHR45849:SF3">
    <property type="entry name" value="HISTONE CHAPERONE RTT106"/>
    <property type="match status" value="1"/>
</dbReference>
<dbReference type="Pfam" id="PF08512">
    <property type="entry name" value="Rttp106-like_middle"/>
    <property type="match status" value="1"/>
</dbReference>
<dbReference type="SMART" id="SM01287">
    <property type="entry name" value="Rtt106"/>
    <property type="match status" value="1"/>
</dbReference>
<dbReference type="SUPFAM" id="SSF50729">
    <property type="entry name" value="PH domain-like"/>
    <property type="match status" value="1"/>
</dbReference>
<keyword id="KW-0143">Chaperone</keyword>
<keyword id="KW-0158">Chromosome</keyword>
<keyword id="KW-0238">DNA-binding</keyword>
<keyword id="KW-0539">Nucleus</keyword>
<keyword id="KW-0804">Transcription</keyword>
<keyword id="KW-0805">Transcription regulation</keyword>
<comment type="function">
    <text evidence="1">Histones H3 and H4 chaperone involved in the nucleosome formation and heterochromatin silencing. Required for the deposition of H3K56ac-carrying H3-H4 complex onto newly-replicated DNA. Plays a role in the transcriptional regulation of the cell-cycle dependent histone genes by creating a repressive structure at the core histone gene promoter (By similarity).</text>
</comment>
<comment type="subunit">
    <text evidence="1">Interacts with histones H3 and H4.</text>
</comment>
<comment type="subcellular location">
    <subcellularLocation>
        <location evidence="1">Nucleus</location>
    </subcellularLocation>
    <subcellularLocation>
        <location evidence="1">Chromosome</location>
    </subcellularLocation>
</comment>
<comment type="similarity">
    <text evidence="3">Belongs to the RTT106 family.</text>
</comment>
<feature type="chain" id="PRO_0000320498" description="Histone chaperone RTT106">
    <location>
        <begin position="1"/>
        <end position="439"/>
    </location>
</feature>
<feature type="region of interest" description="Disordered" evidence="2">
    <location>
        <begin position="66"/>
        <end position="99"/>
    </location>
</feature>
<feature type="region of interest" description="Disordered" evidence="2">
    <location>
        <begin position="352"/>
        <end position="439"/>
    </location>
</feature>
<feature type="compositionally biased region" description="Acidic residues" evidence="2">
    <location>
        <begin position="369"/>
        <end position="378"/>
    </location>
</feature>
<feature type="compositionally biased region" description="Basic and acidic residues" evidence="2">
    <location>
        <begin position="379"/>
        <end position="388"/>
    </location>
</feature>
<feature type="compositionally biased region" description="Acidic residues" evidence="2">
    <location>
        <begin position="389"/>
        <end position="439"/>
    </location>
</feature>
<reference key="1">
    <citation type="journal article" date="2007" name="Plant Cell">
        <title>Dothideomycete-plant interactions illuminated by genome sequencing and EST analysis of the wheat pathogen Stagonospora nodorum.</title>
        <authorList>
            <person name="Hane J.K."/>
            <person name="Lowe R.G.T."/>
            <person name="Solomon P.S."/>
            <person name="Tan K.-C."/>
            <person name="Schoch C.L."/>
            <person name="Spatafora J.W."/>
            <person name="Crous P.W."/>
            <person name="Kodira C.D."/>
            <person name="Birren B.W."/>
            <person name="Galagan J.E."/>
            <person name="Torriani S.F.F."/>
            <person name="McDonald B.A."/>
            <person name="Oliver R.P."/>
        </authorList>
    </citation>
    <scope>NUCLEOTIDE SEQUENCE [LARGE SCALE GENOMIC DNA]</scope>
    <source>
        <strain>SN15 / ATCC MYA-4574 / FGSC 10173</strain>
    </source>
</reference>
<gene>
    <name type="primary">RTT106</name>
    <name type="ORF">SNOG_04902</name>
</gene>
<name>RT106_PHANO</name>
<evidence type="ECO:0000250" key="1"/>
<evidence type="ECO:0000256" key="2">
    <source>
        <dbReference type="SAM" id="MobiDB-lite"/>
    </source>
</evidence>
<evidence type="ECO:0000305" key="3"/>
<accession>Q0UTL2</accession>
<proteinExistence type="inferred from homology"/>
<protein>
    <recommendedName>
        <fullName>Histone chaperone RTT106</fullName>
    </recommendedName>
</protein>
<sequence>MVFTSMNTQVRVPQPPPVPAAVVNPTVVTPAGPHPEEIDEAFASSHELRKRTSLFRDISTFILGQASQPSAEPAAKKRKLEEKTTSQSAPAAPGGSLVSSATKAWRTYPGVSFSIPQRKKFTLELLDKKDGGIRAIGASGNVEFSIAWKDVDQVFCLPIPEKAKKQHNFVVIPVHGDGINPLPEHLQGAAPEPIIWTFEEATGKNIVEGEDPGPGPMAEAIHHCLIQAGTGKQVIFPDAEEFASATPESHRKGDKAYHVKAHRGSKEGYLFFTSVGILYGYKKPLAYFDFASVNSIAYAAVLRNTFNLVITTQTQEIEFGMLDQADYAGINDYVQKHGLQDASLAAARRAKKLNVNKPKDKSNGTAPPDADDAEEEEGELQKAERELQDQEDEEEEDYDPGSEGESEGSGSDSEDEDGGGGYDEGDGDEVEADDDEMEE</sequence>